<feature type="chain" id="PRO_1000205050" description="V-type proton ATPase subunit E">
    <location>
        <begin position="1"/>
        <end position="185"/>
    </location>
</feature>
<proteinExistence type="inferred from homology"/>
<gene>
    <name evidence="1" type="primary">atpE</name>
    <name type="ordered locus">Deide_00960</name>
</gene>
<dbReference type="EMBL" id="CP001114">
    <property type="protein sequence ID" value="ACO44896.1"/>
    <property type="molecule type" value="Genomic_DNA"/>
</dbReference>
<dbReference type="RefSeq" id="WP_012692019.1">
    <property type="nucleotide sequence ID" value="NC_012526.1"/>
</dbReference>
<dbReference type="SMR" id="C1CXU0"/>
<dbReference type="STRING" id="546414.Deide_00960"/>
<dbReference type="PaxDb" id="546414-Deide_00960"/>
<dbReference type="KEGG" id="ddr:Deide_00960"/>
<dbReference type="eggNOG" id="COG1390">
    <property type="taxonomic scope" value="Bacteria"/>
</dbReference>
<dbReference type="HOGENOM" id="CLU_123924_0_0_0"/>
<dbReference type="OrthoDB" id="68858at2"/>
<dbReference type="Proteomes" id="UP000002208">
    <property type="component" value="Chromosome"/>
</dbReference>
<dbReference type="GO" id="GO:0033178">
    <property type="term" value="C:proton-transporting two-sector ATPase complex, catalytic domain"/>
    <property type="evidence" value="ECO:0007669"/>
    <property type="project" value="InterPro"/>
</dbReference>
<dbReference type="GO" id="GO:0005524">
    <property type="term" value="F:ATP binding"/>
    <property type="evidence" value="ECO:0007669"/>
    <property type="project" value="UniProtKB-UniRule"/>
</dbReference>
<dbReference type="GO" id="GO:0046933">
    <property type="term" value="F:proton-transporting ATP synthase activity, rotational mechanism"/>
    <property type="evidence" value="ECO:0007669"/>
    <property type="project" value="UniProtKB-UniRule"/>
</dbReference>
<dbReference type="GO" id="GO:0046961">
    <property type="term" value="F:proton-transporting ATPase activity, rotational mechanism"/>
    <property type="evidence" value="ECO:0007669"/>
    <property type="project" value="InterPro"/>
</dbReference>
<dbReference type="GO" id="GO:0042777">
    <property type="term" value="P:proton motive force-driven plasma membrane ATP synthesis"/>
    <property type="evidence" value="ECO:0007669"/>
    <property type="project" value="UniProtKB-UniRule"/>
</dbReference>
<dbReference type="Gene3D" id="3.30.2320.30">
    <property type="entry name" value="ATP synthase, E subunit, C-terminal"/>
    <property type="match status" value="1"/>
</dbReference>
<dbReference type="Gene3D" id="1.20.5.620">
    <property type="entry name" value="F1F0 ATP synthase subunit B, membrane domain"/>
    <property type="match status" value="1"/>
</dbReference>
<dbReference type="HAMAP" id="MF_00311">
    <property type="entry name" value="ATP_synth_E_arch"/>
    <property type="match status" value="1"/>
</dbReference>
<dbReference type="InterPro" id="IPR038495">
    <property type="entry name" value="ATPase_E_C"/>
</dbReference>
<dbReference type="InterPro" id="IPR002842">
    <property type="entry name" value="ATPase_V1_Esu"/>
</dbReference>
<dbReference type="Pfam" id="PF01991">
    <property type="entry name" value="vATP-synt_E"/>
    <property type="match status" value="1"/>
</dbReference>
<dbReference type="SUPFAM" id="SSF160527">
    <property type="entry name" value="V-type ATPase subunit E-like"/>
    <property type="match status" value="1"/>
</dbReference>
<name>VATE_DEIDV</name>
<accession>C1CXU0</accession>
<protein>
    <recommendedName>
        <fullName evidence="1">V-type proton ATPase subunit E</fullName>
    </recommendedName>
    <alternativeName>
        <fullName evidence="1">V-ATPase subunit E</fullName>
    </alternativeName>
</protein>
<sequence length="185" mass="20403">MALDKLLEQEAQSEIERIRAEARDRSQMIVAQAQERAQALIESRQRALETQRQAGIVRARSAADLDLNAARLTASESGMSQVYELVNQQITEITRVPEYRDILGRLIYQAREVITDAEAVEVNPAEAALARELVHDIAVRENPAIQGGVRVVARGGKSGITNTLAGRLERVRGELAPQVSRLLAE</sequence>
<reference key="1">
    <citation type="journal article" date="2009" name="PLoS Genet.">
        <title>Alliance of proteomics and genomics to unravel the specificities of Sahara bacterium Deinococcus deserti.</title>
        <authorList>
            <person name="de Groot A."/>
            <person name="Dulermo R."/>
            <person name="Ortet P."/>
            <person name="Blanchard L."/>
            <person name="Guerin P."/>
            <person name="Fernandez B."/>
            <person name="Vacherie B."/>
            <person name="Dossat C."/>
            <person name="Jolivet E."/>
            <person name="Siguier P."/>
            <person name="Chandler M."/>
            <person name="Barakat M."/>
            <person name="Dedieu A."/>
            <person name="Barbe V."/>
            <person name="Heulin T."/>
            <person name="Sommer S."/>
            <person name="Achouak W."/>
            <person name="Armengaud J."/>
        </authorList>
    </citation>
    <scope>NUCLEOTIDE SEQUENCE [LARGE SCALE GENOMIC DNA]</scope>
    <source>
        <strain>DSM 17065 / CIP 109153 / LMG 22923 / VCD115</strain>
    </source>
</reference>
<evidence type="ECO:0000255" key="1">
    <source>
        <dbReference type="HAMAP-Rule" id="MF_00311"/>
    </source>
</evidence>
<keyword id="KW-0066">ATP synthesis</keyword>
<keyword id="KW-0375">Hydrogen ion transport</keyword>
<keyword id="KW-0406">Ion transport</keyword>
<keyword id="KW-1185">Reference proteome</keyword>
<keyword id="KW-0813">Transport</keyword>
<organism>
    <name type="scientific">Deinococcus deserti (strain DSM 17065 / CIP 109153 / LMG 22923 / VCD115)</name>
    <dbReference type="NCBI Taxonomy" id="546414"/>
    <lineage>
        <taxon>Bacteria</taxon>
        <taxon>Thermotogati</taxon>
        <taxon>Deinococcota</taxon>
        <taxon>Deinococci</taxon>
        <taxon>Deinococcales</taxon>
        <taxon>Deinococcaceae</taxon>
        <taxon>Deinococcus</taxon>
    </lineage>
</organism>
<comment type="function">
    <text evidence="1">Produces ATP from ADP in the presence of a proton gradient across the membrane.</text>
</comment>
<comment type="similarity">
    <text evidence="1">Belongs to the V-ATPase E subunit family.</text>
</comment>